<evidence type="ECO:0000255" key="1">
    <source>
        <dbReference type="HAMAP-Rule" id="MF_00110"/>
    </source>
</evidence>
<sequence length="370" mass="39435">MTTPTPLRSVTVNTPPPYTIAIGPGLLHDPPRLAATIRGRHALILSDSEVAPRYAAQLHETLLRARPDLHLNVFTLPAGETSKSLENFGAAIAQLATLGATRDACLFALGGGVIGDLTGFTAACWMRGIDYVQVPTTLLAMVDSSVGGKTAVDIPQGKNMVGAFHPPRAVIADTDTLATLPLRELRAGLSEVIKYGAIRDPVFFHWLQTTREALLARDPAALAQAIARSCEHKADIVGRDPLEKGERVLLNLGHTFGHAIETTQGYSTPGSNNLNHGEAVAVGMVLAARLSNTLGLAPAEDTETLKNLLDAYGLPTVLPSGLKPETLLERMRLDKKNIAGRLRLVLWRGIGHAEAVPDVDEAAVRQILAN</sequence>
<name>AROB_XYLFM</name>
<comment type="function">
    <text evidence="1">Catalyzes the conversion of 3-deoxy-D-arabino-heptulosonate 7-phosphate (DAHP) to dehydroquinate (DHQ).</text>
</comment>
<comment type="catalytic activity">
    <reaction evidence="1">
        <text>7-phospho-2-dehydro-3-deoxy-D-arabino-heptonate = 3-dehydroquinate + phosphate</text>
        <dbReference type="Rhea" id="RHEA:21968"/>
        <dbReference type="ChEBI" id="CHEBI:32364"/>
        <dbReference type="ChEBI" id="CHEBI:43474"/>
        <dbReference type="ChEBI" id="CHEBI:58394"/>
        <dbReference type="EC" id="4.2.3.4"/>
    </reaction>
</comment>
<comment type="cofactor">
    <cofactor evidence="1">
        <name>Co(2+)</name>
        <dbReference type="ChEBI" id="CHEBI:48828"/>
    </cofactor>
    <cofactor evidence="1">
        <name>Zn(2+)</name>
        <dbReference type="ChEBI" id="CHEBI:29105"/>
    </cofactor>
    <text evidence="1">Binds 1 divalent metal cation per subunit. Can use either Co(2+) or Zn(2+).</text>
</comment>
<comment type="cofactor">
    <cofactor evidence="1">
        <name>NAD(+)</name>
        <dbReference type="ChEBI" id="CHEBI:57540"/>
    </cofactor>
</comment>
<comment type="pathway">
    <text evidence="1">Metabolic intermediate biosynthesis; chorismate biosynthesis; chorismate from D-erythrose 4-phosphate and phosphoenolpyruvate: step 2/7.</text>
</comment>
<comment type="subcellular location">
    <subcellularLocation>
        <location evidence="1">Cytoplasm</location>
    </subcellularLocation>
</comment>
<comment type="similarity">
    <text evidence="1">Belongs to the sugar phosphate cyclases superfamily. Dehydroquinate synthase family.</text>
</comment>
<reference key="1">
    <citation type="journal article" date="2010" name="J. Bacteriol.">
        <title>Whole genome sequences of two Xylella fastidiosa strains (M12 and M23) causing almond leaf scorch disease in California.</title>
        <authorList>
            <person name="Chen J."/>
            <person name="Xie G."/>
            <person name="Han S."/>
            <person name="Chertkov O."/>
            <person name="Sims D."/>
            <person name="Civerolo E.L."/>
        </authorList>
    </citation>
    <scope>NUCLEOTIDE SEQUENCE [LARGE SCALE GENOMIC DNA]</scope>
    <source>
        <strain>M12</strain>
    </source>
</reference>
<accession>B0U6C7</accession>
<protein>
    <recommendedName>
        <fullName evidence="1">3-dehydroquinate synthase</fullName>
        <shortName evidence="1">DHQS</shortName>
        <ecNumber evidence="1">4.2.3.4</ecNumber>
    </recommendedName>
</protein>
<organism>
    <name type="scientific">Xylella fastidiosa (strain M12)</name>
    <dbReference type="NCBI Taxonomy" id="405440"/>
    <lineage>
        <taxon>Bacteria</taxon>
        <taxon>Pseudomonadati</taxon>
        <taxon>Pseudomonadota</taxon>
        <taxon>Gammaproteobacteria</taxon>
        <taxon>Lysobacterales</taxon>
        <taxon>Lysobacteraceae</taxon>
        <taxon>Xylella</taxon>
    </lineage>
</organism>
<gene>
    <name evidence="1" type="primary">aroB</name>
    <name type="ordered locus">Xfasm12_0691</name>
</gene>
<keyword id="KW-0028">Amino-acid biosynthesis</keyword>
<keyword id="KW-0057">Aromatic amino acid biosynthesis</keyword>
<keyword id="KW-0170">Cobalt</keyword>
<keyword id="KW-0963">Cytoplasm</keyword>
<keyword id="KW-0456">Lyase</keyword>
<keyword id="KW-0479">Metal-binding</keyword>
<keyword id="KW-0520">NAD</keyword>
<keyword id="KW-0547">Nucleotide-binding</keyword>
<keyword id="KW-0862">Zinc</keyword>
<dbReference type="EC" id="4.2.3.4" evidence="1"/>
<dbReference type="EMBL" id="CP000941">
    <property type="protein sequence ID" value="ACA11689.1"/>
    <property type="molecule type" value="Genomic_DNA"/>
</dbReference>
<dbReference type="RefSeq" id="WP_012337742.1">
    <property type="nucleotide sequence ID" value="NC_010513.1"/>
</dbReference>
<dbReference type="SMR" id="B0U6C7"/>
<dbReference type="KEGG" id="xfm:Xfasm12_0691"/>
<dbReference type="HOGENOM" id="CLU_001201_0_2_6"/>
<dbReference type="UniPathway" id="UPA00053">
    <property type="reaction ID" value="UER00085"/>
</dbReference>
<dbReference type="GO" id="GO:0005737">
    <property type="term" value="C:cytoplasm"/>
    <property type="evidence" value="ECO:0007669"/>
    <property type="project" value="UniProtKB-SubCell"/>
</dbReference>
<dbReference type="GO" id="GO:0003856">
    <property type="term" value="F:3-dehydroquinate synthase activity"/>
    <property type="evidence" value="ECO:0007669"/>
    <property type="project" value="UniProtKB-UniRule"/>
</dbReference>
<dbReference type="GO" id="GO:0046872">
    <property type="term" value="F:metal ion binding"/>
    <property type="evidence" value="ECO:0007669"/>
    <property type="project" value="UniProtKB-KW"/>
</dbReference>
<dbReference type="GO" id="GO:0000166">
    <property type="term" value="F:nucleotide binding"/>
    <property type="evidence" value="ECO:0007669"/>
    <property type="project" value="UniProtKB-KW"/>
</dbReference>
<dbReference type="GO" id="GO:0008652">
    <property type="term" value="P:amino acid biosynthetic process"/>
    <property type="evidence" value="ECO:0007669"/>
    <property type="project" value="UniProtKB-KW"/>
</dbReference>
<dbReference type="GO" id="GO:0009073">
    <property type="term" value="P:aromatic amino acid family biosynthetic process"/>
    <property type="evidence" value="ECO:0007669"/>
    <property type="project" value="UniProtKB-KW"/>
</dbReference>
<dbReference type="GO" id="GO:0009423">
    <property type="term" value="P:chorismate biosynthetic process"/>
    <property type="evidence" value="ECO:0007669"/>
    <property type="project" value="UniProtKB-UniRule"/>
</dbReference>
<dbReference type="CDD" id="cd08195">
    <property type="entry name" value="DHQS"/>
    <property type="match status" value="1"/>
</dbReference>
<dbReference type="FunFam" id="3.40.50.1970:FF:000007">
    <property type="entry name" value="Pentafunctional AROM polypeptide"/>
    <property type="match status" value="1"/>
</dbReference>
<dbReference type="Gene3D" id="3.40.50.1970">
    <property type="match status" value="1"/>
</dbReference>
<dbReference type="Gene3D" id="1.20.1090.10">
    <property type="entry name" value="Dehydroquinate synthase-like - alpha domain"/>
    <property type="match status" value="1"/>
</dbReference>
<dbReference type="HAMAP" id="MF_00110">
    <property type="entry name" value="DHQ_synthase"/>
    <property type="match status" value="1"/>
</dbReference>
<dbReference type="InterPro" id="IPR050071">
    <property type="entry name" value="Dehydroquinate_synthase"/>
</dbReference>
<dbReference type="InterPro" id="IPR016037">
    <property type="entry name" value="DHQ_synth_AroB"/>
</dbReference>
<dbReference type="InterPro" id="IPR030963">
    <property type="entry name" value="DHQ_synth_fam"/>
</dbReference>
<dbReference type="InterPro" id="IPR030960">
    <property type="entry name" value="DHQS/DOIS_N"/>
</dbReference>
<dbReference type="InterPro" id="IPR056179">
    <property type="entry name" value="DHQS_C"/>
</dbReference>
<dbReference type="NCBIfam" id="TIGR01357">
    <property type="entry name" value="aroB"/>
    <property type="match status" value="1"/>
</dbReference>
<dbReference type="PANTHER" id="PTHR43622">
    <property type="entry name" value="3-DEHYDROQUINATE SYNTHASE"/>
    <property type="match status" value="1"/>
</dbReference>
<dbReference type="PANTHER" id="PTHR43622:SF7">
    <property type="entry name" value="3-DEHYDROQUINATE SYNTHASE, CHLOROPLASTIC"/>
    <property type="match status" value="1"/>
</dbReference>
<dbReference type="Pfam" id="PF01761">
    <property type="entry name" value="DHQ_synthase"/>
    <property type="match status" value="1"/>
</dbReference>
<dbReference type="Pfam" id="PF24621">
    <property type="entry name" value="DHQS_C"/>
    <property type="match status" value="1"/>
</dbReference>
<dbReference type="PIRSF" id="PIRSF001455">
    <property type="entry name" value="DHQ_synth"/>
    <property type="match status" value="1"/>
</dbReference>
<dbReference type="SUPFAM" id="SSF56796">
    <property type="entry name" value="Dehydroquinate synthase-like"/>
    <property type="match status" value="1"/>
</dbReference>
<proteinExistence type="inferred from homology"/>
<feature type="chain" id="PRO_1000094657" description="3-dehydroquinate synthase">
    <location>
        <begin position="1"/>
        <end position="370"/>
    </location>
</feature>
<feature type="binding site" evidence="1">
    <location>
        <begin position="112"/>
        <end position="116"/>
    </location>
    <ligand>
        <name>NAD(+)</name>
        <dbReference type="ChEBI" id="CHEBI:57540"/>
    </ligand>
</feature>
<feature type="binding site" evidence="1">
    <location>
        <begin position="136"/>
        <end position="137"/>
    </location>
    <ligand>
        <name>NAD(+)</name>
        <dbReference type="ChEBI" id="CHEBI:57540"/>
    </ligand>
</feature>
<feature type="binding site" evidence="1">
    <location>
        <position position="149"/>
    </location>
    <ligand>
        <name>NAD(+)</name>
        <dbReference type="ChEBI" id="CHEBI:57540"/>
    </ligand>
</feature>
<feature type="binding site" evidence="1">
    <location>
        <position position="158"/>
    </location>
    <ligand>
        <name>NAD(+)</name>
        <dbReference type="ChEBI" id="CHEBI:57540"/>
    </ligand>
</feature>
<feature type="binding site" evidence="1">
    <location>
        <begin position="176"/>
        <end position="179"/>
    </location>
    <ligand>
        <name>NAD(+)</name>
        <dbReference type="ChEBI" id="CHEBI:57540"/>
    </ligand>
</feature>
<feature type="binding site" evidence="1">
    <location>
        <position position="191"/>
    </location>
    <ligand>
        <name>Zn(2+)</name>
        <dbReference type="ChEBI" id="CHEBI:29105"/>
    </ligand>
</feature>
<feature type="binding site" evidence="1">
    <location>
        <position position="254"/>
    </location>
    <ligand>
        <name>Zn(2+)</name>
        <dbReference type="ChEBI" id="CHEBI:29105"/>
    </ligand>
</feature>
<feature type="binding site" evidence="1">
    <location>
        <position position="276"/>
    </location>
    <ligand>
        <name>Zn(2+)</name>
        <dbReference type="ChEBI" id="CHEBI:29105"/>
    </ligand>
</feature>